<dbReference type="EMBL" id="CP001068">
    <property type="protein sequence ID" value="ACD25954.1"/>
    <property type="molecule type" value="Genomic_DNA"/>
</dbReference>
<dbReference type="SMR" id="B2U8B2"/>
<dbReference type="STRING" id="402626.Rpic_0804"/>
<dbReference type="KEGG" id="rpi:Rpic_0804"/>
<dbReference type="eggNOG" id="COG0228">
    <property type="taxonomic scope" value="Bacteria"/>
</dbReference>
<dbReference type="HOGENOM" id="CLU_100590_5_1_4"/>
<dbReference type="GO" id="GO:0005737">
    <property type="term" value="C:cytoplasm"/>
    <property type="evidence" value="ECO:0007669"/>
    <property type="project" value="UniProtKB-ARBA"/>
</dbReference>
<dbReference type="GO" id="GO:0015935">
    <property type="term" value="C:small ribosomal subunit"/>
    <property type="evidence" value="ECO:0007669"/>
    <property type="project" value="TreeGrafter"/>
</dbReference>
<dbReference type="GO" id="GO:0003735">
    <property type="term" value="F:structural constituent of ribosome"/>
    <property type="evidence" value="ECO:0007669"/>
    <property type="project" value="InterPro"/>
</dbReference>
<dbReference type="GO" id="GO:0006412">
    <property type="term" value="P:translation"/>
    <property type="evidence" value="ECO:0007669"/>
    <property type="project" value="UniProtKB-UniRule"/>
</dbReference>
<dbReference type="Gene3D" id="3.30.1320.10">
    <property type="match status" value="1"/>
</dbReference>
<dbReference type="HAMAP" id="MF_00385">
    <property type="entry name" value="Ribosomal_bS16"/>
    <property type="match status" value="1"/>
</dbReference>
<dbReference type="InterPro" id="IPR000307">
    <property type="entry name" value="Ribosomal_bS16"/>
</dbReference>
<dbReference type="InterPro" id="IPR023803">
    <property type="entry name" value="Ribosomal_bS16_dom_sf"/>
</dbReference>
<dbReference type="NCBIfam" id="TIGR00002">
    <property type="entry name" value="S16"/>
    <property type="match status" value="1"/>
</dbReference>
<dbReference type="PANTHER" id="PTHR12919">
    <property type="entry name" value="30S RIBOSOMAL PROTEIN S16"/>
    <property type="match status" value="1"/>
</dbReference>
<dbReference type="PANTHER" id="PTHR12919:SF20">
    <property type="entry name" value="SMALL RIBOSOMAL SUBUNIT PROTEIN BS16M"/>
    <property type="match status" value="1"/>
</dbReference>
<dbReference type="Pfam" id="PF00886">
    <property type="entry name" value="Ribosomal_S16"/>
    <property type="match status" value="1"/>
</dbReference>
<dbReference type="SUPFAM" id="SSF54565">
    <property type="entry name" value="Ribosomal protein S16"/>
    <property type="match status" value="1"/>
</dbReference>
<feature type="chain" id="PRO_1000196460" description="Small ribosomal subunit protein bS16">
    <location>
        <begin position="1"/>
        <end position="84"/>
    </location>
</feature>
<keyword id="KW-0687">Ribonucleoprotein</keyword>
<keyword id="KW-0689">Ribosomal protein</keyword>
<accession>B2U8B2</accession>
<sequence length="84" mass="9318">MVVIRLARGGSKKRPFFNIVATDSRNRRDGRFIERVGFYNPLAGEGEEGLRIVQDRLTYWEGVGAQLSPTVARLVKQGAKKAAA</sequence>
<reference key="1">
    <citation type="submission" date="2008-05" db="EMBL/GenBank/DDBJ databases">
        <title>Complete sequence of chromosome 1 of Ralstonia pickettii 12J.</title>
        <authorList>
            <person name="Lucas S."/>
            <person name="Copeland A."/>
            <person name="Lapidus A."/>
            <person name="Glavina del Rio T."/>
            <person name="Dalin E."/>
            <person name="Tice H."/>
            <person name="Bruce D."/>
            <person name="Goodwin L."/>
            <person name="Pitluck S."/>
            <person name="Meincke L."/>
            <person name="Brettin T."/>
            <person name="Detter J.C."/>
            <person name="Han C."/>
            <person name="Kuske C.R."/>
            <person name="Schmutz J."/>
            <person name="Larimer F."/>
            <person name="Land M."/>
            <person name="Hauser L."/>
            <person name="Kyrpides N."/>
            <person name="Mikhailova N."/>
            <person name="Marsh T."/>
            <person name="Richardson P."/>
        </authorList>
    </citation>
    <scope>NUCLEOTIDE SEQUENCE [LARGE SCALE GENOMIC DNA]</scope>
    <source>
        <strain>12J</strain>
    </source>
</reference>
<name>RS16_RALPJ</name>
<protein>
    <recommendedName>
        <fullName evidence="1">Small ribosomal subunit protein bS16</fullName>
    </recommendedName>
    <alternativeName>
        <fullName evidence="2">30S ribosomal protein S16</fullName>
    </alternativeName>
</protein>
<evidence type="ECO:0000255" key="1">
    <source>
        <dbReference type="HAMAP-Rule" id="MF_00385"/>
    </source>
</evidence>
<evidence type="ECO:0000305" key="2"/>
<comment type="similarity">
    <text evidence="1">Belongs to the bacterial ribosomal protein bS16 family.</text>
</comment>
<organism>
    <name type="scientific">Ralstonia pickettii (strain 12J)</name>
    <dbReference type="NCBI Taxonomy" id="402626"/>
    <lineage>
        <taxon>Bacteria</taxon>
        <taxon>Pseudomonadati</taxon>
        <taxon>Pseudomonadota</taxon>
        <taxon>Betaproteobacteria</taxon>
        <taxon>Burkholderiales</taxon>
        <taxon>Burkholderiaceae</taxon>
        <taxon>Ralstonia</taxon>
    </lineage>
</organism>
<gene>
    <name evidence="1" type="primary">rpsP</name>
    <name type="ordered locus">Rpic_0804</name>
</gene>
<proteinExistence type="inferred from homology"/>